<protein>
    <recommendedName>
        <fullName evidence="1">Adenine phosphoribosyltransferase</fullName>
        <shortName evidence="1">APRT</shortName>
        <ecNumber evidence="1">2.4.2.7</ecNumber>
    </recommendedName>
</protein>
<feature type="chain" id="PRO_1000000366" description="Adenine phosphoribosyltransferase">
    <location>
        <begin position="1"/>
        <end position="172"/>
    </location>
</feature>
<gene>
    <name evidence="1" type="primary">apt</name>
    <name type="ordered locus">Syncc9605_1834</name>
</gene>
<organism>
    <name type="scientific">Synechococcus sp. (strain CC9605)</name>
    <dbReference type="NCBI Taxonomy" id="110662"/>
    <lineage>
        <taxon>Bacteria</taxon>
        <taxon>Bacillati</taxon>
        <taxon>Cyanobacteriota</taxon>
        <taxon>Cyanophyceae</taxon>
        <taxon>Synechococcales</taxon>
        <taxon>Synechococcaceae</taxon>
        <taxon>Synechococcus</taxon>
    </lineage>
</organism>
<proteinExistence type="inferred from homology"/>
<dbReference type="EC" id="2.4.2.7" evidence="1"/>
<dbReference type="EMBL" id="CP000110">
    <property type="protein sequence ID" value="ABB35579.1"/>
    <property type="molecule type" value="Genomic_DNA"/>
</dbReference>
<dbReference type="SMR" id="Q3AIK3"/>
<dbReference type="STRING" id="110662.Syncc9605_1834"/>
<dbReference type="KEGG" id="syd:Syncc9605_1834"/>
<dbReference type="eggNOG" id="COG0503">
    <property type="taxonomic scope" value="Bacteria"/>
</dbReference>
<dbReference type="HOGENOM" id="CLU_063339_3_0_3"/>
<dbReference type="OrthoDB" id="9803963at2"/>
<dbReference type="UniPathway" id="UPA00588">
    <property type="reaction ID" value="UER00646"/>
</dbReference>
<dbReference type="GO" id="GO:0005737">
    <property type="term" value="C:cytoplasm"/>
    <property type="evidence" value="ECO:0007669"/>
    <property type="project" value="UniProtKB-SubCell"/>
</dbReference>
<dbReference type="GO" id="GO:0002055">
    <property type="term" value="F:adenine binding"/>
    <property type="evidence" value="ECO:0007669"/>
    <property type="project" value="TreeGrafter"/>
</dbReference>
<dbReference type="GO" id="GO:0003999">
    <property type="term" value="F:adenine phosphoribosyltransferase activity"/>
    <property type="evidence" value="ECO:0007669"/>
    <property type="project" value="UniProtKB-UniRule"/>
</dbReference>
<dbReference type="GO" id="GO:0016208">
    <property type="term" value="F:AMP binding"/>
    <property type="evidence" value="ECO:0007669"/>
    <property type="project" value="TreeGrafter"/>
</dbReference>
<dbReference type="GO" id="GO:0006168">
    <property type="term" value="P:adenine salvage"/>
    <property type="evidence" value="ECO:0007669"/>
    <property type="project" value="InterPro"/>
</dbReference>
<dbReference type="GO" id="GO:0044209">
    <property type="term" value="P:AMP salvage"/>
    <property type="evidence" value="ECO:0007669"/>
    <property type="project" value="UniProtKB-UniRule"/>
</dbReference>
<dbReference type="GO" id="GO:0006166">
    <property type="term" value="P:purine ribonucleoside salvage"/>
    <property type="evidence" value="ECO:0007669"/>
    <property type="project" value="UniProtKB-KW"/>
</dbReference>
<dbReference type="CDD" id="cd06223">
    <property type="entry name" value="PRTases_typeI"/>
    <property type="match status" value="1"/>
</dbReference>
<dbReference type="FunFam" id="3.40.50.2020:FF:000021">
    <property type="entry name" value="Adenine phosphoribosyltransferase"/>
    <property type="match status" value="1"/>
</dbReference>
<dbReference type="Gene3D" id="3.40.50.2020">
    <property type="match status" value="1"/>
</dbReference>
<dbReference type="HAMAP" id="MF_00004">
    <property type="entry name" value="Aden_phosphoribosyltr"/>
    <property type="match status" value="1"/>
</dbReference>
<dbReference type="InterPro" id="IPR005764">
    <property type="entry name" value="Ade_phspho_trans"/>
</dbReference>
<dbReference type="InterPro" id="IPR000836">
    <property type="entry name" value="PRibTrfase_dom"/>
</dbReference>
<dbReference type="InterPro" id="IPR029057">
    <property type="entry name" value="PRTase-like"/>
</dbReference>
<dbReference type="InterPro" id="IPR050054">
    <property type="entry name" value="UPRTase/APRTase"/>
</dbReference>
<dbReference type="NCBIfam" id="TIGR01090">
    <property type="entry name" value="apt"/>
    <property type="match status" value="1"/>
</dbReference>
<dbReference type="NCBIfam" id="NF002634">
    <property type="entry name" value="PRK02304.1-3"/>
    <property type="match status" value="1"/>
</dbReference>
<dbReference type="NCBIfam" id="NF002636">
    <property type="entry name" value="PRK02304.1-5"/>
    <property type="match status" value="1"/>
</dbReference>
<dbReference type="PANTHER" id="PTHR32315">
    <property type="entry name" value="ADENINE PHOSPHORIBOSYLTRANSFERASE"/>
    <property type="match status" value="1"/>
</dbReference>
<dbReference type="PANTHER" id="PTHR32315:SF3">
    <property type="entry name" value="ADENINE PHOSPHORIBOSYLTRANSFERASE"/>
    <property type="match status" value="1"/>
</dbReference>
<dbReference type="Pfam" id="PF00156">
    <property type="entry name" value="Pribosyltran"/>
    <property type="match status" value="1"/>
</dbReference>
<dbReference type="SUPFAM" id="SSF53271">
    <property type="entry name" value="PRTase-like"/>
    <property type="match status" value="1"/>
</dbReference>
<dbReference type="PROSITE" id="PS00103">
    <property type="entry name" value="PUR_PYR_PR_TRANSFER"/>
    <property type="match status" value="1"/>
</dbReference>
<evidence type="ECO:0000255" key="1">
    <source>
        <dbReference type="HAMAP-Rule" id="MF_00004"/>
    </source>
</evidence>
<comment type="function">
    <text evidence="1">Catalyzes a salvage reaction resulting in the formation of AMP, that is energically less costly than de novo synthesis.</text>
</comment>
<comment type="catalytic activity">
    <reaction evidence="1">
        <text>AMP + diphosphate = 5-phospho-alpha-D-ribose 1-diphosphate + adenine</text>
        <dbReference type="Rhea" id="RHEA:16609"/>
        <dbReference type="ChEBI" id="CHEBI:16708"/>
        <dbReference type="ChEBI" id="CHEBI:33019"/>
        <dbReference type="ChEBI" id="CHEBI:58017"/>
        <dbReference type="ChEBI" id="CHEBI:456215"/>
        <dbReference type="EC" id="2.4.2.7"/>
    </reaction>
</comment>
<comment type="pathway">
    <text evidence="1">Purine metabolism; AMP biosynthesis via salvage pathway; AMP from adenine: step 1/1.</text>
</comment>
<comment type="subunit">
    <text evidence="1">Homodimer.</text>
</comment>
<comment type="subcellular location">
    <subcellularLocation>
        <location evidence="1">Cytoplasm</location>
    </subcellularLocation>
</comment>
<comment type="similarity">
    <text evidence="1">Belongs to the purine/pyrimidine phosphoribosyltransferase family.</text>
</comment>
<name>APT_SYNSC</name>
<keyword id="KW-0963">Cytoplasm</keyword>
<keyword id="KW-0328">Glycosyltransferase</keyword>
<keyword id="KW-0660">Purine salvage</keyword>
<keyword id="KW-0808">Transferase</keyword>
<accession>Q3AIK3</accession>
<reference key="1">
    <citation type="submission" date="2005-07" db="EMBL/GenBank/DDBJ databases">
        <title>Complete sequence of Synechococcus sp. CC9605.</title>
        <authorList>
            <consortium name="US DOE Joint Genome Institute"/>
            <person name="Copeland A."/>
            <person name="Lucas S."/>
            <person name="Lapidus A."/>
            <person name="Barry K."/>
            <person name="Detter J.C."/>
            <person name="Glavina T."/>
            <person name="Hammon N."/>
            <person name="Israni S."/>
            <person name="Pitluck S."/>
            <person name="Schmutz J."/>
            <person name="Martinez M."/>
            <person name="Larimer F."/>
            <person name="Land M."/>
            <person name="Kyrpides N."/>
            <person name="Ivanova N."/>
            <person name="Richardson P."/>
        </authorList>
    </citation>
    <scope>NUCLEOTIDE SEQUENCE [LARGE SCALE GENOMIC DNA]</scope>
    <source>
        <strain>CC9605</strain>
    </source>
</reference>
<sequence>MDLQSHIRSIPDFPKPGILFRDINPLLRSPEAMAEVISQFGRICDQVKPDLIVGIESRGFIFGAPLASDRRLGFVPVRKPGKLPGEVVGLDYALEYGTDRLEIQADALEHSPRVLVVDDLLATGGTAAATGQLVEQAGGCLVGFAFVIELEGFGGRRALPAGQPVEALLRYG</sequence>